<dbReference type="EMBL" id="U91601">
    <property type="protein sequence ID" value="AAB71639.1"/>
    <property type="molecule type" value="mRNA"/>
</dbReference>
<dbReference type="EMBL" id="AK053133">
    <property type="protein sequence ID" value="BAC35274.1"/>
    <property type="molecule type" value="mRNA"/>
</dbReference>
<dbReference type="EMBL" id="AK084460">
    <property type="protein sequence ID" value="BAC39190.1"/>
    <property type="molecule type" value="mRNA"/>
</dbReference>
<dbReference type="CCDS" id="CCDS16895.1"/>
<dbReference type="RefSeq" id="NP_033073.1">
    <property type="nucleotide sequence ID" value="NM_009047.6"/>
</dbReference>
<dbReference type="SMR" id="O35929"/>
<dbReference type="FunCoup" id="O35929">
    <property type="interactions" value="789"/>
</dbReference>
<dbReference type="MINT" id="O35929"/>
<dbReference type="STRING" id="10090.ENSMUSP00000000369"/>
<dbReference type="iPTMnet" id="O35929"/>
<dbReference type="PhosphoSitePlus" id="O35929"/>
<dbReference type="PaxDb" id="10090-ENSMUSP00000000369"/>
<dbReference type="ProteomicsDB" id="253112"/>
<dbReference type="Antibodypedia" id="10156">
    <property type="antibodies" value="105 antibodies from 26 providers"/>
</dbReference>
<dbReference type="DNASU" id="19700"/>
<dbReference type="Ensembl" id="ENSMUST00000000369.4">
    <property type="protein sequence ID" value="ENSMUSP00000000369.4"/>
    <property type="gene ID" value="ENSMUSG00000000359.4"/>
</dbReference>
<dbReference type="GeneID" id="19700"/>
<dbReference type="KEGG" id="mmu:19700"/>
<dbReference type="UCSC" id="uc008nfw.1">
    <property type="organism name" value="mouse"/>
</dbReference>
<dbReference type="AGR" id="MGI:1097696"/>
<dbReference type="CTD" id="28954"/>
<dbReference type="MGI" id="MGI:1097696">
    <property type="gene designation" value="Rem1"/>
</dbReference>
<dbReference type="VEuPathDB" id="HostDB:ENSMUSG00000000359"/>
<dbReference type="eggNOG" id="KOG0395">
    <property type="taxonomic scope" value="Eukaryota"/>
</dbReference>
<dbReference type="GeneTree" id="ENSGT00940000160613"/>
<dbReference type="HOGENOM" id="CLU_041217_3_2_1"/>
<dbReference type="InParanoid" id="O35929"/>
<dbReference type="OMA" id="SCHVMEV"/>
<dbReference type="OrthoDB" id="5239715at2759"/>
<dbReference type="PhylomeDB" id="O35929"/>
<dbReference type="TreeFam" id="TF314379"/>
<dbReference type="BioGRID-ORCS" id="19700">
    <property type="hits" value="2 hits in 76 CRISPR screens"/>
</dbReference>
<dbReference type="ChiTaRS" id="Rem1">
    <property type="organism name" value="mouse"/>
</dbReference>
<dbReference type="PRO" id="PR:O35929"/>
<dbReference type="Proteomes" id="UP000000589">
    <property type="component" value="Chromosome 2"/>
</dbReference>
<dbReference type="RNAct" id="O35929">
    <property type="molecule type" value="protein"/>
</dbReference>
<dbReference type="Bgee" id="ENSMUSG00000000359">
    <property type="expression patterns" value="Expressed in renal cortex interstitium and 90 other cell types or tissues"/>
</dbReference>
<dbReference type="ExpressionAtlas" id="O35929">
    <property type="expression patterns" value="baseline and differential"/>
</dbReference>
<dbReference type="GO" id="GO:0031674">
    <property type="term" value="C:I band"/>
    <property type="evidence" value="ECO:0000314"/>
    <property type="project" value="MGI"/>
</dbReference>
<dbReference type="GO" id="GO:0030315">
    <property type="term" value="C:T-tubule"/>
    <property type="evidence" value="ECO:0000314"/>
    <property type="project" value="MGI"/>
</dbReference>
<dbReference type="GO" id="GO:0005516">
    <property type="term" value="F:calmodulin binding"/>
    <property type="evidence" value="ECO:0007669"/>
    <property type="project" value="UniProtKB-KW"/>
</dbReference>
<dbReference type="GO" id="GO:0005525">
    <property type="term" value="F:GTP binding"/>
    <property type="evidence" value="ECO:0007669"/>
    <property type="project" value="UniProtKB-KW"/>
</dbReference>
<dbReference type="GO" id="GO:0003924">
    <property type="term" value="F:GTPase activity"/>
    <property type="evidence" value="ECO:0007669"/>
    <property type="project" value="InterPro"/>
</dbReference>
<dbReference type="GO" id="GO:0044325">
    <property type="term" value="F:transmembrane transporter binding"/>
    <property type="evidence" value="ECO:0000353"/>
    <property type="project" value="MGI"/>
</dbReference>
<dbReference type="GO" id="GO:1904878">
    <property type="term" value="P:negative regulation of calcium ion transmembrane transport via high voltage-gated calcium channel"/>
    <property type="evidence" value="ECO:0000314"/>
    <property type="project" value="MGI"/>
</dbReference>
<dbReference type="GO" id="GO:0014722">
    <property type="term" value="P:regulation of skeletal muscle contraction by calcium ion signaling"/>
    <property type="evidence" value="ECO:0000314"/>
    <property type="project" value="MGI"/>
</dbReference>
<dbReference type="CDD" id="cd04148">
    <property type="entry name" value="RGK"/>
    <property type="match status" value="1"/>
</dbReference>
<dbReference type="FunFam" id="3.40.50.300:FF:000311">
    <property type="entry name" value="GTP-binding protein RAD"/>
    <property type="match status" value="1"/>
</dbReference>
<dbReference type="Gene3D" id="3.40.50.300">
    <property type="entry name" value="P-loop containing nucleotide triphosphate hydrolases"/>
    <property type="match status" value="1"/>
</dbReference>
<dbReference type="InterPro" id="IPR027417">
    <property type="entry name" value="P-loop_NTPase"/>
</dbReference>
<dbReference type="InterPro" id="IPR017358">
    <property type="entry name" value="RGK"/>
</dbReference>
<dbReference type="InterPro" id="IPR051641">
    <property type="entry name" value="RGK_GTP-binding_reg"/>
</dbReference>
<dbReference type="InterPro" id="IPR005225">
    <property type="entry name" value="Small_GTP-bd"/>
</dbReference>
<dbReference type="InterPro" id="IPR001806">
    <property type="entry name" value="Small_GTPase"/>
</dbReference>
<dbReference type="NCBIfam" id="TIGR00231">
    <property type="entry name" value="small_GTP"/>
    <property type="match status" value="1"/>
</dbReference>
<dbReference type="PANTHER" id="PTHR45775:SF2">
    <property type="entry name" value="GTP-BINDING PROTEIN REM 1"/>
    <property type="match status" value="1"/>
</dbReference>
<dbReference type="PANTHER" id="PTHR45775">
    <property type="entry name" value="RAD, GEM/KIR FAMILY MEMBER 2, ISOFORM C"/>
    <property type="match status" value="1"/>
</dbReference>
<dbReference type="Pfam" id="PF00071">
    <property type="entry name" value="Ras"/>
    <property type="match status" value="1"/>
</dbReference>
<dbReference type="PIRSF" id="PIRSF038017">
    <property type="entry name" value="GTP-binding_GEM"/>
    <property type="match status" value="1"/>
</dbReference>
<dbReference type="PRINTS" id="PR00449">
    <property type="entry name" value="RASTRNSFRMNG"/>
</dbReference>
<dbReference type="SMART" id="SM00175">
    <property type="entry name" value="RAB"/>
    <property type="match status" value="1"/>
</dbReference>
<dbReference type="SMART" id="SM00173">
    <property type="entry name" value="RAS"/>
    <property type="match status" value="1"/>
</dbReference>
<dbReference type="SMART" id="SM00174">
    <property type="entry name" value="RHO"/>
    <property type="match status" value="1"/>
</dbReference>
<dbReference type="SUPFAM" id="SSF52540">
    <property type="entry name" value="P-loop containing nucleoside triphosphate hydrolases"/>
    <property type="match status" value="1"/>
</dbReference>
<dbReference type="PROSITE" id="PS51421">
    <property type="entry name" value="RAS"/>
    <property type="match status" value="1"/>
</dbReference>
<comment type="function">
    <text evidence="1">Promotes endothelial cell sprouting and actin cytoskeletal reorganization (By similarity). May be involved in angiogenesis. May function in Ca(2+) signaling.</text>
</comment>
<comment type="subunit">
    <text evidence="1 3">In vitro, interacts with calmodulin in a calcium-dependent manner (By similarity). Interacts 14-3-3 family members including YWHAE, YWHAH, YWHAQ, YWHAZ in a phosphorylation-dependent manner.</text>
</comment>
<comment type="tissue specificity">
    <text>High expression in cardiac muscle. Moderate expression in lung, skeletal muscle and kidney. Low levels in spleen and brain.</text>
</comment>
<comment type="induction">
    <text>Repressed by lipopolysaccharide stimulation.</text>
</comment>
<comment type="similarity">
    <text evidence="4">Belongs to the small GTPase superfamily. RGK family.</text>
</comment>
<gene>
    <name type="primary">Rem1</name>
    <name type="synonym">Rem</name>
</gene>
<accession>O35929</accession>
<reference key="1">
    <citation type="journal article" date="1997" name="J. Biol. Chem.">
        <title>Rem is a new member of the Rad- and Gem/Kir Ras-related GTP-binding protein family repressed by lipopolysaccharide stimulation.</title>
        <authorList>
            <person name="Finlin B.S."/>
            <person name="Andres D.A."/>
        </authorList>
    </citation>
    <scope>NUCLEOTIDE SEQUENCE [MRNA]</scope>
    <source>
        <tissue>Testis</tissue>
    </source>
</reference>
<reference key="2">
    <citation type="journal article" date="2005" name="Science">
        <title>The transcriptional landscape of the mammalian genome.</title>
        <authorList>
            <person name="Carninci P."/>
            <person name="Kasukawa T."/>
            <person name="Katayama S."/>
            <person name="Gough J."/>
            <person name="Frith M.C."/>
            <person name="Maeda N."/>
            <person name="Oyama R."/>
            <person name="Ravasi T."/>
            <person name="Lenhard B."/>
            <person name="Wells C."/>
            <person name="Kodzius R."/>
            <person name="Shimokawa K."/>
            <person name="Bajic V.B."/>
            <person name="Brenner S.E."/>
            <person name="Batalov S."/>
            <person name="Forrest A.R."/>
            <person name="Zavolan M."/>
            <person name="Davis M.J."/>
            <person name="Wilming L.G."/>
            <person name="Aidinis V."/>
            <person name="Allen J.E."/>
            <person name="Ambesi-Impiombato A."/>
            <person name="Apweiler R."/>
            <person name="Aturaliya R.N."/>
            <person name="Bailey T.L."/>
            <person name="Bansal M."/>
            <person name="Baxter L."/>
            <person name="Beisel K.W."/>
            <person name="Bersano T."/>
            <person name="Bono H."/>
            <person name="Chalk A.M."/>
            <person name="Chiu K.P."/>
            <person name="Choudhary V."/>
            <person name="Christoffels A."/>
            <person name="Clutterbuck D.R."/>
            <person name="Crowe M.L."/>
            <person name="Dalla E."/>
            <person name="Dalrymple B.P."/>
            <person name="de Bono B."/>
            <person name="Della Gatta G."/>
            <person name="di Bernardo D."/>
            <person name="Down T."/>
            <person name="Engstrom P."/>
            <person name="Fagiolini M."/>
            <person name="Faulkner G."/>
            <person name="Fletcher C.F."/>
            <person name="Fukushima T."/>
            <person name="Furuno M."/>
            <person name="Futaki S."/>
            <person name="Gariboldi M."/>
            <person name="Georgii-Hemming P."/>
            <person name="Gingeras T.R."/>
            <person name="Gojobori T."/>
            <person name="Green R.E."/>
            <person name="Gustincich S."/>
            <person name="Harbers M."/>
            <person name="Hayashi Y."/>
            <person name="Hensch T.K."/>
            <person name="Hirokawa N."/>
            <person name="Hill D."/>
            <person name="Huminiecki L."/>
            <person name="Iacono M."/>
            <person name="Ikeo K."/>
            <person name="Iwama A."/>
            <person name="Ishikawa T."/>
            <person name="Jakt M."/>
            <person name="Kanapin A."/>
            <person name="Katoh M."/>
            <person name="Kawasawa Y."/>
            <person name="Kelso J."/>
            <person name="Kitamura H."/>
            <person name="Kitano H."/>
            <person name="Kollias G."/>
            <person name="Krishnan S.P."/>
            <person name="Kruger A."/>
            <person name="Kummerfeld S.K."/>
            <person name="Kurochkin I.V."/>
            <person name="Lareau L.F."/>
            <person name="Lazarevic D."/>
            <person name="Lipovich L."/>
            <person name="Liu J."/>
            <person name="Liuni S."/>
            <person name="McWilliam S."/>
            <person name="Madan Babu M."/>
            <person name="Madera M."/>
            <person name="Marchionni L."/>
            <person name="Matsuda H."/>
            <person name="Matsuzawa S."/>
            <person name="Miki H."/>
            <person name="Mignone F."/>
            <person name="Miyake S."/>
            <person name="Morris K."/>
            <person name="Mottagui-Tabar S."/>
            <person name="Mulder N."/>
            <person name="Nakano N."/>
            <person name="Nakauchi H."/>
            <person name="Ng P."/>
            <person name="Nilsson R."/>
            <person name="Nishiguchi S."/>
            <person name="Nishikawa S."/>
            <person name="Nori F."/>
            <person name="Ohara O."/>
            <person name="Okazaki Y."/>
            <person name="Orlando V."/>
            <person name="Pang K.C."/>
            <person name="Pavan W.J."/>
            <person name="Pavesi G."/>
            <person name="Pesole G."/>
            <person name="Petrovsky N."/>
            <person name="Piazza S."/>
            <person name="Reed J."/>
            <person name="Reid J.F."/>
            <person name="Ring B.Z."/>
            <person name="Ringwald M."/>
            <person name="Rost B."/>
            <person name="Ruan Y."/>
            <person name="Salzberg S.L."/>
            <person name="Sandelin A."/>
            <person name="Schneider C."/>
            <person name="Schoenbach C."/>
            <person name="Sekiguchi K."/>
            <person name="Semple C.A."/>
            <person name="Seno S."/>
            <person name="Sessa L."/>
            <person name="Sheng Y."/>
            <person name="Shibata Y."/>
            <person name="Shimada H."/>
            <person name="Shimada K."/>
            <person name="Silva D."/>
            <person name="Sinclair B."/>
            <person name="Sperling S."/>
            <person name="Stupka E."/>
            <person name="Sugiura K."/>
            <person name="Sultana R."/>
            <person name="Takenaka Y."/>
            <person name="Taki K."/>
            <person name="Tammoja K."/>
            <person name="Tan S.L."/>
            <person name="Tang S."/>
            <person name="Taylor M.S."/>
            <person name="Tegner J."/>
            <person name="Teichmann S.A."/>
            <person name="Ueda H.R."/>
            <person name="van Nimwegen E."/>
            <person name="Verardo R."/>
            <person name="Wei C.L."/>
            <person name="Yagi K."/>
            <person name="Yamanishi H."/>
            <person name="Zabarovsky E."/>
            <person name="Zhu S."/>
            <person name="Zimmer A."/>
            <person name="Hide W."/>
            <person name="Bult C."/>
            <person name="Grimmond S.M."/>
            <person name="Teasdale R.D."/>
            <person name="Liu E.T."/>
            <person name="Brusic V."/>
            <person name="Quackenbush J."/>
            <person name="Wahlestedt C."/>
            <person name="Mattick J.S."/>
            <person name="Hume D.A."/>
            <person name="Kai C."/>
            <person name="Sasaki D."/>
            <person name="Tomaru Y."/>
            <person name="Fukuda S."/>
            <person name="Kanamori-Katayama M."/>
            <person name="Suzuki M."/>
            <person name="Aoki J."/>
            <person name="Arakawa T."/>
            <person name="Iida J."/>
            <person name="Imamura K."/>
            <person name="Itoh M."/>
            <person name="Kato T."/>
            <person name="Kawaji H."/>
            <person name="Kawagashira N."/>
            <person name="Kawashima T."/>
            <person name="Kojima M."/>
            <person name="Kondo S."/>
            <person name="Konno H."/>
            <person name="Nakano K."/>
            <person name="Ninomiya N."/>
            <person name="Nishio T."/>
            <person name="Okada M."/>
            <person name="Plessy C."/>
            <person name="Shibata K."/>
            <person name="Shiraki T."/>
            <person name="Suzuki S."/>
            <person name="Tagami M."/>
            <person name="Waki K."/>
            <person name="Watahiki A."/>
            <person name="Okamura-Oho Y."/>
            <person name="Suzuki H."/>
            <person name="Kawai J."/>
            <person name="Hayashizaki Y."/>
        </authorList>
    </citation>
    <scope>NUCLEOTIDE SEQUENCE [LARGE SCALE MRNA]</scope>
    <source>
        <strain>C57BL/6J</strain>
        <tissue>Heart</tissue>
        <tissue>Lung</tissue>
    </source>
</reference>
<reference key="3">
    <citation type="journal article" date="1999" name="Arch. Biochem. Biophys.">
        <title>Phosphorylation-dependent association of the Ras-related GTP-binding protein Rem with 14-3-3 proteins.</title>
        <authorList>
            <person name="Finlin B.S."/>
            <person name="Andres D.A."/>
        </authorList>
    </citation>
    <scope>INTERACTION WITH 14-3-3 PROTEINS</scope>
</reference>
<reference key="4">
    <citation type="journal article" date="2010" name="Cell">
        <title>A tissue-specific atlas of mouse protein phosphorylation and expression.</title>
        <authorList>
            <person name="Huttlin E.L."/>
            <person name="Jedrychowski M.P."/>
            <person name="Elias J.E."/>
            <person name="Goswami T."/>
            <person name="Rad R."/>
            <person name="Beausoleil S.A."/>
            <person name="Villen J."/>
            <person name="Haas W."/>
            <person name="Sowa M.E."/>
            <person name="Gygi S.P."/>
        </authorList>
    </citation>
    <scope>PHOSPHORYLATION [LARGE SCALE ANALYSIS] AT SER-51</scope>
    <scope>IDENTIFICATION BY MASS SPECTROMETRY [LARGE SCALE ANALYSIS]</scope>
    <source>
        <tissue>Kidney</tissue>
        <tissue>Lung</tissue>
        <tissue>Testis</tissue>
    </source>
</reference>
<name>REM1_MOUSE</name>
<evidence type="ECO:0000250" key="1"/>
<evidence type="ECO:0000256" key="2">
    <source>
        <dbReference type="SAM" id="MobiDB-lite"/>
    </source>
</evidence>
<evidence type="ECO:0000269" key="3">
    <source>
    </source>
</evidence>
<evidence type="ECO:0000305" key="4"/>
<evidence type="ECO:0007744" key="5">
    <source>
    </source>
</evidence>
<keyword id="KW-0112">Calmodulin-binding</keyword>
<keyword id="KW-0342">GTP-binding</keyword>
<keyword id="KW-0547">Nucleotide-binding</keyword>
<keyword id="KW-0597">Phosphoprotein</keyword>
<keyword id="KW-1185">Reference proteome</keyword>
<proteinExistence type="evidence at protein level"/>
<protein>
    <recommendedName>
        <fullName>GTP-binding protein REM 1</fullName>
    </recommendedName>
    <alternativeName>
        <fullName>Rad and Gem-like GTP-binding protein 1</fullName>
    </alternativeName>
</protein>
<feature type="chain" id="PRO_0000122482" description="GTP-binding protein REM 1">
    <location>
        <begin position="1"/>
        <end position="297"/>
    </location>
</feature>
<feature type="region of interest" description="Disordered" evidence="2">
    <location>
        <begin position="1"/>
        <end position="73"/>
    </location>
</feature>
<feature type="region of interest" description="Calmodulin-binding">
    <location>
        <begin position="267"/>
        <end position="286"/>
    </location>
</feature>
<feature type="compositionally biased region" description="Polar residues" evidence="2">
    <location>
        <begin position="1"/>
        <end position="10"/>
    </location>
</feature>
<feature type="compositionally biased region" description="Low complexity" evidence="2">
    <location>
        <begin position="64"/>
        <end position="73"/>
    </location>
</feature>
<feature type="binding site" evidence="1">
    <location>
        <begin position="87"/>
        <end position="94"/>
    </location>
    <ligand>
        <name>GTP</name>
        <dbReference type="ChEBI" id="CHEBI:37565"/>
    </ligand>
</feature>
<feature type="binding site" evidence="1">
    <location>
        <begin position="194"/>
        <end position="197"/>
    </location>
    <ligand>
        <name>GTP</name>
        <dbReference type="ChEBI" id="CHEBI:37565"/>
    </ligand>
</feature>
<feature type="modified residue" description="Phosphoserine" evidence="5">
    <location>
        <position position="51"/>
    </location>
</feature>
<sequence length="297" mass="32909">MTLNTQQEAKTTLRRRASTPLPLSSRGHQPGRLCTAPSAPSQHPRLGQSVSLNPPVRKPSPAQDGWSSESSDSEGSWEALYRVVLLGDPGVGKTSLASLFAEKQDRDPHEQLGGVYERTLSVDGEDTTLVVMDTWEAEKLDESWCQESCLQAGSAYVIVYSIADRSSFESASELRIQLRRTHQANHVPIILVGNKADLARCREVSVEEGRACAVVFDCKFIETSATLQHNVTELFEGVVRQLRLRRQDNAAPETPSPRRRASLGQRARRFLARLTARSARRRALKARSKSCHNLAVL</sequence>
<organism>
    <name type="scientific">Mus musculus</name>
    <name type="common">Mouse</name>
    <dbReference type="NCBI Taxonomy" id="10090"/>
    <lineage>
        <taxon>Eukaryota</taxon>
        <taxon>Metazoa</taxon>
        <taxon>Chordata</taxon>
        <taxon>Craniata</taxon>
        <taxon>Vertebrata</taxon>
        <taxon>Euteleostomi</taxon>
        <taxon>Mammalia</taxon>
        <taxon>Eutheria</taxon>
        <taxon>Euarchontoglires</taxon>
        <taxon>Glires</taxon>
        <taxon>Rodentia</taxon>
        <taxon>Myomorpha</taxon>
        <taxon>Muroidea</taxon>
        <taxon>Muridae</taxon>
        <taxon>Murinae</taxon>
        <taxon>Mus</taxon>
        <taxon>Mus</taxon>
    </lineage>
</organism>